<organism>
    <name type="scientific">Bifidobacterium longum (strain DJO10A)</name>
    <dbReference type="NCBI Taxonomy" id="205913"/>
    <lineage>
        <taxon>Bacteria</taxon>
        <taxon>Bacillati</taxon>
        <taxon>Actinomycetota</taxon>
        <taxon>Actinomycetes</taxon>
        <taxon>Bifidobacteriales</taxon>
        <taxon>Bifidobacteriaceae</taxon>
        <taxon>Bifidobacterium</taxon>
    </lineage>
</organism>
<evidence type="ECO:0000255" key="1">
    <source>
        <dbReference type="HAMAP-Rule" id="MF_00607"/>
    </source>
</evidence>
<name>RSMA_BIFLD</name>
<proteinExistence type="inferred from homology"/>
<comment type="function">
    <text evidence="1">Specifically dimethylates two adjacent adenosines (A1518 and A1519) in the loop of a conserved hairpin near the 3'-end of 16S rRNA in the 30S particle. May play a critical role in biogenesis of 30S subunits.</text>
</comment>
<comment type="catalytic activity">
    <reaction evidence="1">
        <text>adenosine(1518)/adenosine(1519) in 16S rRNA + 4 S-adenosyl-L-methionine = N(6)-dimethyladenosine(1518)/N(6)-dimethyladenosine(1519) in 16S rRNA + 4 S-adenosyl-L-homocysteine + 4 H(+)</text>
        <dbReference type="Rhea" id="RHEA:19609"/>
        <dbReference type="Rhea" id="RHEA-COMP:10232"/>
        <dbReference type="Rhea" id="RHEA-COMP:10233"/>
        <dbReference type="ChEBI" id="CHEBI:15378"/>
        <dbReference type="ChEBI" id="CHEBI:57856"/>
        <dbReference type="ChEBI" id="CHEBI:59789"/>
        <dbReference type="ChEBI" id="CHEBI:74411"/>
        <dbReference type="ChEBI" id="CHEBI:74493"/>
        <dbReference type="EC" id="2.1.1.182"/>
    </reaction>
</comment>
<comment type="subcellular location">
    <subcellularLocation>
        <location evidence="1">Cytoplasm</location>
    </subcellularLocation>
</comment>
<comment type="similarity">
    <text evidence="1">Belongs to the class I-like SAM-binding methyltransferase superfamily. rRNA adenine N(6)-methyltransferase family. RsmA subfamily.</text>
</comment>
<protein>
    <recommendedName>
        <fullName evidence="1">Ribosomal RNA small subunit methyltransferase A</fullName>
        <ecNumber evidence="1">2.1.1.182</ecNumber>
    </recommendedName>
    <alternativeName>
        <fullName evidence="1">16S rRNA (adenine(1518)-N(6)/adenine(1519)-N(6))-dimethyltransferase</fullName>
    </alternativeName>
    <alternativeName>
        <fullName evidence="1">16S rRNA dimethyladenosine transferase</fullName>
    </alternativeName>
    <alternativeName>
        <fullName evidence="1">16S rRNA dimethylase</fullName>
    </alternativeName>
    <alternativeName>
        <fullName evidence="1">S-adenosylmethionine-6-N', N'-adenosyl(rRNA) dimethyltransferase</fullName>
    </alternativeName>
</protein>
<dbReference type="EC" id="2.1.1.182" evidence="1"/>
<dbReference type="EMBL" id="CP000605">
    <property type="protein sequence ID" value="ACD98897.1"/>
    <property type="molecule type" value="Genomic_DNA"/>
</dbReference>
<dbReference type="RefSeq" id="WP_012472074.1">
    <property type="nucleotide sequence ID" value="NZ_AABM02000008.1"/>
</dbReference>
<dbReference type="SMR" id="B3DP38"/>
<dbReference type="KEGG" id="blj:BLD_1452"/>
<dbReference type="HOGENOM" id="CLU_041220_1_1_11"/>
<dbReference type="Proteomes" id="UP000002419">
    <property type="component" value="Chromosome"/>
</dbReference>
<dbReference type="GO" id="GO:0005829">
    <property type="term" value="C:cytosol"/>
    <property type="evidence" value="ECO:0007669"/>
    <property type="project" value="TreeGrafter"/>
</dbReference>
<dbReference type="GO" id="GO:0052908">
    <property type="term" value="F:16S rRNA (adenine(1518)-N(6)/adenine(1519)-N(6))-dimethyltransferase activity"/>
    <property type="evidence" value="ECO:0007669"/>
    <property type="project" value="UniProtKB-EC"/>
</dbReference>
<dbReference type="GO" id="GO:0003723">
    <property type="term" value="F:RNA binding"/>
    <property type="evidence" value="ECO:0007669"/>
    <property type="project" value="UniProtKB-KW"/>
</dbReference>
<dbReference type="FunFam" id="3.40.50.150:FF:000023">
    <property type="entry name" value="Ribosomal RNA small subunit methyltransferase A"/>
    <property type="match status" value="1"/>
</dbReference>
<dbReference type="Gene3D" id="1.10.8.100">
    <property type="entry name" value="Ribosomal RNA adenine dimethylase-like, domain 2"/>
    <property type="match status" value="1"/>
</dbReference>
<dbReference type="Gene3D" id="3.40.50.150">
    <property type="entry name" value="Vaccinia Virus protein VP39"/>
    <property type="match status" value="1"/>
</dbReference>
<dbReference type="HAMAP" id="MF_00607">
    <property type="entry name" value="16SrRNA_methyltr_A"/>
    <property type="match status" value="1"/>
</dbReference>
<dbReference type="InterPro" id="IPR001737">
    <property type="entry name" value="KsgA/Erm"/>
</dbReference>
<dbReference type="InterPro" id="IPR023165">
    <property type="entry name" value="rRNA_Ade_diMease-like_C"/>
</dbReference>
<dbReference type="InterPro" id="IPR020596">
    <property type="entry name" value="rRNA_Ade_Mease_Trfase_CS"/>
</dbReference>
<dbReference type="InterPro" id="IPR020598">
    <property type="entry name" value="rRNA_Ade_methylase_Trfase_N"/>
</dbReference>
<dbReference type="InterPro" id="IPR011530">
    <property type="entry name" value="rRNA_adenine_dimethylase"/>
</dbReference>
<dbReference type="InterPro" id="IPR029063">
    <property type="entry name" value="SAM-dependent_MTases_sf"/>
</dbReference>
<dbReference type="NCBIfam" id="TIGR00755">
    <property type="entry name" value="ksgA"/>
    <property type="match status" value="1"/>
</dbReference>
<dbReference type="PANTHER" id="PTHR11727">
    <property type="entry name" value="DIMETHYLADENOSINE TRANSFERASE"/>
    <property type="match status" value="1"/>
</dbReference>
<dbReference type="PANTHER" id="PTHR11727:SF7">
    <property type="entry name" value="DIMETHYLADENOSINE TRANSFERASE-RELATED"/>
    <property type="match status" value="1"/>
</dbReference>
<dbReference type="Pfam" id="PF00398">
    <property type="entry name" value="RrnaAD"/>
    <property type="match status" value="1"/>
</dbReference>
<dbReference type="SMART" id="SM00650">
    <property type="entry name" value="rADc"/>
    <property type="match status" value="1"/>
</dbReference>
<dbReference type="SUPFAM" id="SSF53335">
    <property type="entry name" value="S-adenosyl-L-methionine-dependent methyltransferases"/>
    <property type="match status" value="1"/>
</dbReference>
<dbReference type="PROSITE" id="PS01131">
    <property type="entry name" value="RRNA_A_DIMETH"/>
    <property type="match status" value="1"/>
</dbReference>
<dbReference type="PROSITE" id="PS51689">
    <property type="entry name" value="SAM_RNA_A_N6_MT"/>
    <property type="match status" value="1"/>
</dbReference>
<keyword id="KW-0963">Cytoplasm</keyword>
<keyword id="KW-0489">Methyltransferase</keyword>
<keyword id="KW-0694">RNA-binding</keyword>
<keyword id="KW-0698">rRNA processing</keyword>
<keyword id="KW-0949">S-adenosyl-L-methionine</keyword>
<keyword id="KW-0808">Transferase</keyword>
<sequence length="307" mass="32618">MNDTIPATGHLLGAADIRRIAADAGISPTKKFGQNFVIDPGTVRRIVREAGVTAANHVMEVGPGLGSLTLAILETGATMTAVEIDPPLAERLPGTVAEFMPEATSRLTVVNRDALTVTPENVPDFSDDASFTLVANLPYNVATPILLTLLERFDNLGSFLVMVQKEVADRLAAKPGSKIYGTPSVKLAWYGTAERVGTIGRNVFWPAPNVDSALVKFTRYQADDPAAPGTANSTDDGTQRELVFRLIDAAFGQRRKTLHAALKTIAPSEAFSIAGIDPTRRGETLTIAEFTALAKAIESCGDGDEAQ</sequence>
<gene>
    <name evidence="1" type="primary">rsmA</name>
    <name evidence="1" type="synonym">ksgA</name>
    <name type="ordered locus">BLD_1452</name>
</gene>
<reference key="1">
    <citation type="journal article" date="2008" name="BMC Genomics">
        <title>Comparative genomic analysis of the gut bacterium Bifidobacterium longum reveals loci susceptible to deletion during pure culture growth.</title>
        <authorList>
            <person name="Lee J.H."/>
            <person name="Karamychev V.N."/>
            <person name="Kozyavkin S.A."/>
            <person name="Mills D."/>
            <person name="Pavlov A.R."/>
            <person name="Pavlova N.V."/>
            <person name="Polouchine N.N."/>
            <person name="Richardson P.M."/>
            <person name="Shakhova V.V."/>
            <person name="Slesarev A.I."/>
            <person name="Weimer B."/>
            <person name="O'Sullivan D.J."/>
        </authorList>
    </citation>
    <scope>NUCLEOTIDE SEQUENCE [LARGE SCALE GENOMIC DNA]</scope>
    <source>
        <strain>DJO10A</strain>
    </source>
</reference>
<accession>B3DP38</accession>
<feature type="chain" id="PRO_1000130246" description="Ribosomal RNA small subunit methyltransferase A">
    <location>
        <begin position="1"/>
        <end position="307"/>
    </location>
</feature>
<feature type="binding site" evidence="1">
    <location>
        <position position="35"/>
    </location>
    <ligand>
        <name>S-adenosyl-L-methionine</name>
        <dbReference type="ChEBI" id="CHEBI:59789"/>
    </ligand>
</feature>
<feature type="binding site" evidence="1">
    <location>
        <position position="37"/>
    </location>
    <ligand>
        <name>S-adenosyl-L-methionine</name>
        <dbReference type="ChEBI" id="CHEBI:59789"/>
    </ligand>
</feature>
<feature type="binding site" evidence="1">
    <location>
        <position position="62"/>
    </location>
    <ligand>
        <name>S-adenosyl-L-methionine</name>
        <dbReference type="ChEBI" id="CHEBI:59789"/>
    </ligand>
</feature>
<feature type="binding site" evidence="1">
    <location>
        <position position="83"/>
    </location>
    <ligand>
        <name>S-adenosyl-L-methionine</name>
        <dbReference type="ChEBI" id="CHEBI:59789"/>
    </ligand>
</feature>
<feature type="binding site" evidence="1">
    <location>
        <position position="113"/>
    </location>
    <ligand>
        <name>S-adenosyl-L-methionine</name>
        <dbReference type="ChEBI" id="CHEBI:59789"/>
    </ligand>
</feature>
<feature type="binding site" evidence="1">
    <location>
        <position position="136"/>
    </location>
    <ligand>
        <name>S-adenosyl-L-methionine</name>
        <dbReference type="ChEBI" id="CHEBI:59789"/>
    </ligand>
</feature>